<keyword id="KW-1064">Adaptive immunity</keyword>
<keyword id="KW-1003">Cell membrane</keyword>
<keyword id="KW-1015">Disulfide bond</keyword>
<keyword id="KW-0391">Immunity</keyword>
<keyword id="KW-1280">Immunoglobulin</keyword>
<keyword id="KW-0393">Immunoglobulin domain</keyword>
<keyword id="KW-0472">Membrane</keyword>
<keyword id="KW-1267">Proteomics identification</keyword>
<keyword id="KW-1185">Reference proteome</keyword>
<keyword id="KW-0964">Secreted</keyword>
<keyword id="KW-0732">Signal</keyword>
<dbReference type="EMBL" id="AC244452">
    <property type="status" value="NOT_ANNOTATED_CDS"/>
    <property type="molecule type" value="Genomic_DNA"/>
</dbReference>
<dbReference type="SMR" id="A0A0A0MS14"/>
<dbReference type="FunCoup" id="A0A0A0MS14">
    <property type="interactions" value="283"/>
</dbReference>
<dbReference type="IMGT_GENE-DB" id="IGHV1-45"/>
<dbReference type="BioMuta" id="IGHV1-45"/>
<dbReference type="MassIVE" id="A0A0A0MS14"/>
<dbReference type="Ensembl" id="ENST00000390621.3">
    <property type="protein sequence ID" value="ENSP00000375030.2"/>
    <property type="gene ID" value="ENSG00000211961.3"/>
</dbReference>
<dbReference type="Ensembl" id="ENST00000631826.1">
    <property type="protein sequence ID" value="ENSP00000488436.1"/>
    <property type="gene ID" value="ENSG00000282776.1"/>
</dbReference>
<dbReference type="UCSC" id="uc059ggp.1">
    <property type="organism name" value="human"/>
</dbReference>
<dbReference type="AGR" id="HGNC:5553"/>
<dbReference type="GeneCards" id="IGHV1-45"/>
<dbReference type="HGNC" id="HGNC:5553">
    <property type="gene designation" value="IGHV1-45"/>
</dbReference>
<dbReference type="HPA" id="ENSG00000211961">
    <property type="expression patterns" value="Tissue enhanced (breast, lymphoid tissue, stomach)"/>
</dbReference>
<dbReference type="neXtProt" id="NX_A0A0A0MS14"/>
<dbReference type="OpenTargets" id="ENSG00000211961"/>
<dbReference type="VEuPathDB" id="HostDB:ENSG00000211961"/>
<dbReference type="GeneTree" id="ENSGT00950000183013"/>
<dbReference type="HOGENOM" id="CLU_077975_5_2_1"/>
<dbReference type="InParanoid" id="A0A0A0MS14"/>
<dbReference type="OMA" id="WIVKINT"/>
<dbReference type="OrthoDB" id="9901223at2759"/>
<dbReference type="PAN-GO" id="A0A0A0MS14">
    <property type="GO annotations" value="11 GO annotations based on evolutionary models"/>
</dbReference>
<dbReference type="PhylomeDB" id="A0A0A0MS14"/>
<dbReference type="ChiTaRS" id="IGHV1-45">
    <property type="organism name" value="human"/>
</dbReference>
<dbReference type="Pharos" id="A0A0A0MS14">
    <property type="development level" value="Tdark"/>
</dbReference>
<dbReference type="PRO" id="PR:A0A0A0MS14"/>
<dbReference type="Proteomes" id="UP000005640">
    <property type="component" value="Chromosome 14"/>
</dbReference>
<dbReference type="RNAct" id="A0A0A0MS14">
    <property type="molecule type" value="protein"/>
</dbReference>
<dbReference type="Bgee" id="ENSG00000211961">
    <property type="expression patterns" value="Expressed in rectum and 66 other cell types or tissues"/>
</dbReference>
<dbReference type="GO" id="GO:0005576">
    <property type="term" value="C:extracellular region"/>
    <property type="evidence" value="ECO:0007669"/>
    <property type="project" value="UniProtKB-SubCell"/>
</dbReference>
<dbReference type="GO" id="GO:0019814">
    <property type="term" value="C:immunoglobulin complex"/>
    <property type="evidence" value="ECO:0007669"/>
    <property type="project" value="UniProtKB-KW"/>
</dbReference>
<dbReference type="GO" id="GO:0005886">
    <property type="term" value="C:plasma membrane"/>
    <property type="evidence" value="ECO:0007669"/>
    <property type="project" value="UniProtKB-SubCell"/>
</dbReference>
<dbReference type="GO" id="GO:0003823">
    <property type="term" value="F:antigen binding"/>
    <property type="evidence" value="ECO:0000318"/>
    <property type="project" value="GO_Central"/>
</dbReference>
<dbReference type="GO" id="GO:0016064">
    <property type="term" value="P:immunoglobulin mediated immune response"/>
    <property type="evidence" value="ECO:0000318"/>
    <property type="project" value="GO_Central"/>
</dbReference>
<dbReference type="FunFam" id="2.60.40.10:FF:000556">
    <property type="entry name" value="Immunoglobulin heavy variable 7-81 (non-functional)"/>
    <property type="match status" value="1"/>
</dbReference>
<dbReference type="Gene3D" id="2.60.40.10">
    <property type="entry name" value="Immunoglobulins"/>
    <property type="match status" value="1"/>
</dbReference>
<dbReference type="InterPro" id="IPR007110">
    <property type="entry name" value="Ig-like_dom"/>
</dbReference>
<dbReference type="InterPro" id="IPR036179">
    <property type="entry name" value="Ig-like_dom_sf"/>
</dbReference>
<dbReference type="InterPro" id="IPR013783">
    <property type="entry name" value="Ig-like_fold"/>
</dbReference>
<dbReference type="InterPro" id="IPR013106">
    <property type="entry name" value="Ig_V-set"/>
</dbReference>
<dbReference type="InterPro" id="IPR050199">
    <property type="entry name" value="IgHV"/>
</dbReference>
<dbReference type="PANTHER" id="PTHR23266">
    <property type="entry name" value="IMMUNOGLOBULIN HEAVY CHAIN"/>
    <property type="match status" value="1"/>
</dbReference>
<dbReference type="Pfam" id="PF07686">
    <property type="entry name" value="V-set"/>
    <property type="match status" value="1"/>
</dbReference>
<dbReference type="SMART" id="SM00406">
    <property type="entry name" value="IGv"/>
    <property type="match status" value="1"/>
</dbReference>
<dbReference type="SUPFAM" id="SSF48726">
    <property type="entry name" value="Immunoglobulin"/>
    <property type="match status" value="1"/>
</dbReference>
<dbReference type="PROSITE" id="PS50835">
    <property type="entry name" value="IG_LIKE"/>
    <property type="match status" value="1"/>
</dbReference>
<comment type="function">
    <text evidence="5 6 7 8">V region of the variable domain of immunoglobulin heavy chains that participates in the antigen recognition (PubMed:24600447). Immunoglobulins, also known as antibodies, are membrane-bound or secreted glycoproteins produced by B lymphocytes. In the recognition phase of humoral immunity, the membrane-bound immunoglobulins serve as receptors which, upon binding of a specific antigen, trigger the clonal expansion and differentiation of B lymphocytes into immunoglobulins-secreting plasma cells. Secreted immunoglobulins mediate the effector phase of humoral immunity, which results in the elimination of bound antigens (PubMed:20176268, PubMed:22158414). The antigen binding site is formed by the variable domain of one heavy chain, together with that of its associated light chain. Thus, each immunoglobulin has two antigen binding sites with remarkable affinity for a particular antigen. The variable domains are assembled by a process called V-(D)-J rearrangement and can then be subjected to somatic hypermutations which, after exposure to antigen and selection, allow affinity maturation for a particular antigen (PubMed:17576170, PubMed:20176268).</text>
</comment>
<comment type="subunit">
    <text evidence="6">Immunoglobulins are composed of two identical heavy chains and two identical light chains; disulfide-linked.</text>
</comment>
<comment type="subcellular location">
    <subcellularLocation>
        <location evidence="6 7">Secreted</location>
    </subcellularLocation>
    <subcellularLocation>
        <location evidence="6 7">Cell membrane</location>
    </subcellularLocation>
</comment>
<comment type="polymorphism">
    <text evidence="10">There are several alleles. The sequence shown is that of IMGT allele IGHV1-45*02.</text>
</comment>
<comment type="caution">
    <text evidence="10">For examples of full-length immunoglobulin heavy chains (of different isotypes) see AC P0DOX2, AC P0DOX3, AC P0DOX4, AC P0DOX5 and AC P0DOX6.</text>
</comment>
<organism>
    <name type="scientific">Homo sapiens</name>
    <name type="common">Human</name>
    <dbReference type="NCBI Taxonomy" id="9606"/>
    <lineage>
        <taxon>Eukaryota</taxon>
        <taxon>Metazoa</taxon>
        <taxon>Chordata</taxon>
        <taxon>Craniata</taxon>
        <taxon>Vertebrata</taxon>
        <taxon>Euteleostomi</taxon>
        <taxon>Mammalia</taxon>
        <taxon>Eutheria</taxon>
        <taxon>Euarchontoglires</taxon>
        <taxon>Primates</taxon>
        <taxon>Haplorrhini</taxon>
        <taxon>Catarrhini</taxon>
        <taxon>Hominidae</taxon>
        <taxon>Homo</taxon>
    </lineage>
</organism>
<protein>
    <recommendedName>
        <fullName evidence="4 9">Immunoglobulin heavy variable 1-45</fullName>
    </recommendedName>
</protein>
<name>HV145_HUMAN</name>
<gene>
    <name evidence="4 9" type="primary">IGHV1-45</name>
</gene>
<sequence>MDWTWRILFLVAAVTDAYSQMQLVQSGAEVKKTGSSVKVSCKASGYTFTYRYLHWVRQAPGQALEWMGWITPFNGNTNYAQKFQDRVTITRDRSMSTAYMELSSLRSEDTAMYYCAR</sequence>
<evidence type="ECO:0000250" key="1">
    <source>
        <dbReference type="UniProtKB" id="P23083"/>
    </source>
</evidence>
<evidence type="ECO:0000255" key="2"/>
<evidence type="ECO:0000255" key="3">
    <source>
        <dbReference type="PROSITE-ProRule" id="PRU00114"/>
    </source>
</evidence>
<evidence type="ECO:0000303" key="4">
    <source>
    </source>
</evidence>
<evidence type="ECO:0000303" key="5">
    <source>
    </source>
</evidence>
<evidence type="ECO:0000303" key="6">
    <source>
    </source>
</evidence>
<evidence type="ECO:0000303" key="7">
    <source>
    </source>
</evidence>
<evidence type="ECO:0000303" key="8">
    <source>
    </source>
</evidence>
<evidence type="ECO:0000303" key="9">
    <source ref="3"/>
</evidence>
<evidence type="ECO:0000305" key="10"/>
<reference key="1">
    <citation type="journal article" date="2003" name="Nature">
        <title>The DNA sequence and analysis of human chromosome 14.</title>
        <authorList>
            <person name="Heilig R."/>
            <person name="Eckenberg R."/>
            <person name="Petit J.-L."/>
            <person name="Fonknechten N."/>
            <person name="Da Silva C."/>
            <person name="Cattolico L."/>
            <person name="Levy M."/>
            <person name="Barbe V."/>
            <person name="De Berardinis V."/>
            <person name="Ureta-Vidal A."/>
            <person name="Pelletier E."/>
            <person name="Vico V."/>
            <person name="Anthouard V."/>
            <person name="Rowen L."/>
            <person name="Madan A."/>
            <person name="Qin S."/>
            <person name="Sun H."/>
            <person name="Du H."/>
            <person name="Pepin K."/>
            <person name="Artiguenave F."/>
            <person name="Robert C."/>
            <person name="Cruaud C."/>
            <person name="Bruels T."/>
            <person name="Jaillon O."/>
            <person name="Friedlander L."/>
            <person name="Samson G."/>
            <person name="Brottier P."/>
            <person name="Cure S."/>
            <person name="Segurens B."/>
            <person name="Aniere F."/>
            <person name="Samain S."/>
            <person name="Crespeau H."/>
            <person name="Abbasi N."/>
            <person name="Aiach N."/>
            <person name="Boscus D."/>
            <person name="Dickhoff R."/>
            <person name="Dors M."/>
            <person name="Dubois I."/>
            <person name="Friedman C."/>
            <person name="Gouyvenoux M."/>
            <person name="James R."/>
            <person name="Madan A."/>
            <person name="Mairey-Estrada B."/>
            <person name="Mangenot S."/>
            <person name="Martins N."/>
            <person name="Menard M."/>
            <person name="Oztas S."/>
            <person name="Ratcliffe A."/>
            <person name="Shaffer T."/>
            <person name="Trask B."/>
            <person name="Vacherie B."/>
            <person name="Bellemere C."/>
            <person name="Belser C."/>
            <person name="Besnard-Gonnet M."/>
            <person name="Bartol-Mavel D."/>
            <person name="Boutard M."/>
            <person name="Briez-Silla S."/>
            <person name="Combette S."/>
            <person name="Dufosse-Laurent V."/>
            <person name="Ferron C."/>
            <person name="Lechaplais C."/>
            <person name="Louesse C."/>
            <person name="Muselet D."/>
            <person name="Magdelenat G."/>
            <person name="Pateau E."/>
            <person name="Petit E."/>
            <person name="Sirvain-Trukniewicz P."/>
            <person name="Trybou A."/>
            <person name="Vega-Czarny N."/>
            <person name="Bataille E."/>
            <person name="Bluet E."/>
            <person name="Bordelais I."/>
            <person name="Dubois M."/>
            <person name="Dumont C."/>
            <person name="Guerin T."/>
            <person name="Haffray S."/>
            <person name="Hammadi R."/>
            <person name="Muanga J."/>
            <person name="Pellouin V."/>
            <person name="Robert D."/>
            <person name="Wunderle E."/>
            <person name="Gauguet G."/>
            <person name="Roy A."/>
            <person name="Sainte-Marthe L."/>
            <person name="Verdier J."/>
            <person name="Verdier-Discala C."/>
            <person name="Hillier L.W."/>
            <person name="Fulton L."/>
            <person name="McPherson J."/>
            <person name="Matsuda F."/>
            <person name="Wilson R."/>
            <person name="Scarpelli C."/>
            <person name="Gyapay G."/>
            <person name="Wincker P."/>
            <person name="Saurin W."/>
            <person name="Quetier F."/>
            <person name="Waterston R."/>
            <person name="Hood L."/>
            <person name="Weissenbach J."/>
        </authorList>
    </citation>
    <scope>NUCLEOTIDE SEQUENCE [LARGE SCALE GENOMIC DNA] (IMGT ALLELE IGHV1-45*02)</scope>
</reference>
<reference key="2">
    <citation type="journal article" date="2001" name="Exp. Clin. Immunogenet.">
        <title>Nomenclature of the human immunoglobulin heavy (IGH) genes.</title>
        <authorList>
            <person name="Lefranc M.P."/>
        </authorList>
    </citation>
    <scope>NOMENCLATURE</scope>
</reference>
<reference key="3">
    <citation type="book" date="2001" name="The Immunoglobulin FactsBook.">
        <title>The Immunoglobulin FactsBook.</title>
        <editorList>
            <person name="Lefranc M.P."/>
            <person name="Lefranc G."/>
        </editorList>
        <authorList>
            <person name="Lefranc M.P."/>
            <person name="Lefranc G."/>
        </authorList>
    </citation>
    <scope>NOMENCLATURE</scope>
</reference>
<reference key="4">
    <citation type="journal article" date="2007" name="Annu. Rev. Genet.">
        <title>Immunoglobulin somatic hypermutation.</title>
        <authorList>
            <person name="Teng G."/>
            <person name="Papavasiliou F.N."/>
        </authorList>
    </citation>
    <scope>REVIEW ON SOMATIC HYPERMUTATION</scope>
</reference>
<reference key="5">
    <citation type="journal article" date="2010" name="J. Allergy Clin. Immunol.">
        <title>Structure and function of immunoglobulins.</title>
        <authorList>
            <person name="Schroeder H.W. Jr."/>
            <person name="Cavacini L."/>
        </authorList>
    </citation>
    <scope>REVIEW ON IMMUNOGLOBULINS</scope>
</reference>
<reference key="6">
    <citation type="journal article" date="2012" name="Nat. Rev. Immunol.">
        <title>Molecular programming of B cell memory.</title>
        <authorList>
            <person name="McHeyzer-Williams M."/>
            <person name="Okitsu S."/>
            <person name="Wang N."/>
            <person name="McHeyzer-Williams L."/>
        </authorList>
    </citation>
    <scope>REVIEW ON FUNCTION</scope>
</reference>
<reference key="7">
    <citation type="journal article" date="2014" name="Front. Immunol.">
        <title>Immunoglobulin and T Cell Receptor Genes: IMGT((R)) and the Birth and Rise of Immunoinformatics.</title>
        <authorList>
            <person name="Lefranc M.P."/>
        </authorList>
    </citation>
    <scope>NOMENCLATURE</scope>
</reference>
<feature type="signal peptide" evidence="2">
    <location>
        <begin position="1"/>
        <end position="19"/>
    </location>
</feature>
<feature type="chain" id="PRO_5007385646" description="Immunoglobulin heavy variable 1-45" evidence="2">
    <location>
        <begin position="20"/>
        <end position="117"/>
    </location>
</feature>
<feature type="domain" description="Ig-like" evidence="3">
    <location>
        <begin position="20"/>
        <end position="117" status="greater than"/>
    </location>
</feature>
<feature type="region of interest" description="Framework-1" evidence="1">
    <location>
        <begin position="20"/>
        <end position="44"/>
    </location>
</feature>
<feature type="region of interest" description="Complementarity-determining-1" evidence="1">
    <location>
        <begin position="45"/>
        <end position="52"/>
    </location>
</feature>
<feature type="region of interest" description="Framework-2" evidence="1">
    <location>
        <begin position="53"/>
        <end position="69"/>
    </location>
</feature>
<feature type="region of interest" description="Complementarity-determining-2" evidence="1">
    <location>
        <begin position="70"/>
        <end position="77"/>
    </location>
</feature>
<feature type="region of interest" description="Framework-3" evidence="1">
    <location>
        <begin position="78"/>
        <end position="115"/>
    </location>
</feature>
<feature type="region of interest" description="Complementarity-determining-3" evidence="1">
    <location>
        <begin position="116"/>
        <end position="117" status="greater than"/>
    </location>
</feature>
<feature type="disulfide bond" evidence="3">
    <location>
        <begin position="41"/>
        <end position="115"/>
    </location>
</feature>
<feature type="non-terminal residue">
    <location>
        <position position="117"/>
    </location>
</feature>
<accession>A0A0A0MS14</accession>
<proteinExistence type="evidence at protein level"/>